<evidence type="ECO:0000255" key="1">
    <source>
        <dbReference type="HAMAP-Rule" id="MF_00247"/>
    </source>
</evidence>
<reference key="1">
    <citation type="journal article" date="2003" name="Genome Res.">
        <title>Comparative genome analysis of Vibrio vulnificus, a marine pathogen.</title>
        <authorList>
            <person name="Chen C.-Y."/>
            <person name="Wu K.-M."/>
            <person name="Chang Y.-C."/>
            <person name="Chang C.-H."/>
            <person name="Tsai H.-C."/>
            <person name="Liao T.-L."/>
            <person name="Liu Y.-M."/>
            <person name="Chen H.-J."/>
            <person name="Shen A.B.-T."/>
            <person name="Li J.-C."/>
            <person name="Su T.-L."/>
            <person name="Shao C.-P."/>
            <person name="Lee C.-T."/>
            <person name="Hor L.-I."/>
            <person name="Tsai S.-F."/>
        </authorList>
    </citation>
    <scope>NUCLEOTIDE SEQUENCE [LARGE SCALE GENOMIC DNA]</scope>
    <source>
        <strain>YJ016</strain>
    </source>
</reference>
<name>STHA_VIBVY</name>
<keyword id="KW-0963">Cytoplasm</keyword>
<keyword id="KW-0274">FAD</keyword>
<keyword id="KW-0285">Flavoprotein</keyword>
<keyword id="KW-0520">NAD</keyword>
<keyword id="KW-0521">NADP</keyword>
<keyword id="KW-0560">Oxidoreductase</keyword>
<feature type="chain" id="PRO_0000068078" description="Soluble pyridine nucleotide transhydrogenase">
    <location>
        <begin position="1"/>
        <end position="466"/>
    </location>
</feature>
<feature type="binding site" evidence="1">
    <location>
        <begin position="36"/>
        <end position="45"/>
    </location>
    <ligand>
        <name>FAD</name>
        <dbReference type="ChEBI" id="CHEBI:57692"/>
    </ligand>
</feature>
<organism>
    <name type="scientific">Vibrio vulnificus (strain YJ016)</name>
    <dbReference type="NCBI Taxonomy" id="196600"/>
    <lineage>
        <taxon>Bacteria</taxon>
        <taxon>Pseudomonadati</taxon>
        <taxon>Pseudomonadota</taxon>
        <taxon>Gammaproteobacteria</taxon>
        <taxon>Vibrionales</taxon>
        <taxon>Vibrionaceae</taxon>
        <taxon>Vibrio</taxon>
    </lineage>
</organism>
<accession>Q7MQ83</accession>
<gene>
    <name evidence="1" type="primary">sthA</name>
    <name type="ordered locus">VV0126</name>
</gene>
<sequence length="466" mass="50955">MAHANHFDVIVIGSGPGGEGAAMGLTKAGLKVAVVEKESSVGGGCTHWGTIPSKALRHAVSRIIEFNSNPLFCKNNSSLHATFSTILGHAKSVIDKQTRLRQGFYDRNQCQLIFGTARFTDAHTISVTQNDGTEEVYTADKFVIATGSRPYQPADVDFNHERIYDSDSILSLKHDPRHIIIYGAGVIGCEYASIFRGLGVKTDLINTRDRLLAFLDNEVSDALSYHFWNSGVVIRNDETYERIEGTEDGVIVHLQSGKKMKADCLLYANGRTGNTDKLNLPAVGLQGDSRGQLKVDGNYQTEVEHVYAVGDVIGYPSLASAAYDQGRFVAQAITKGKADGYLIDDIPTGIYTIPEISSVGKTEQELTAAKVPYEVGRSSFKHLARAQIAGKDIGSLKILFHRETKEILGIHCFGERAAEIIHIGQAIMEQKGEANTIEYFVNTTFNYPTMAEAYRVAALNGLNRLF</sequence>
<comment type="function">
    <text evidence="1">Conversion of NADPH, generated by peripheral catabolic pathways, to NADH, which can enter the respiratory chain for energy generation.</text>
</comment>
<comment type="catalytic activity">
    <reaction evidence="1">
        <text>NAD(+) + NADPH = NADH + NADP(+)</text>
        <dbReference type="Rhea" id="RHEA:11692"/>
        <dbReference type="ChEBI" id="CHEBI:57540"/>
        <dbReference type="ChEBI" id="CHEBI:57783"/>
        <dbReference type="ChEBI" id="CHEBI:57945"/>
        <dbReference type="ChEBI" id="CHEBI:58349"/>
        <dbReference type="EC" id="1.6.1.1"/>
    </reaction>
</comment>
<comment type="cofactor">
    <cofactor evidence="1">
        <name>FAD</name>
        <dbReference type="ChEBI" id="CHEBI:57692"/>
    </cofactor>
    <text evidence="1">Binds 1 FAD per subunit.</text>
</comment>
<comment type="subcellular location">
    <subcellularLocation>
        <location evidence="1">Cytoplasm</location>
    </subcellularLocation>
</comment>
<comment type="similarity">
    <text evidence="1">Belongs to the class-I pyridine nucleotide-disulfide oxidoreductase family.</text>
</comment>
<proteinExistence type="inferred from homology"/>
<dbReference type="EC" id="1.6.1.1" evidence="1"/>
<dbReference type="EMBL" id="BA000037">
    <property type="protein sequence ID" value="BAC92889.1"/>
    <property type="molecule type" value="Genomic_DNA"/>
</dbReference>
<dbReference type="RefSeq" id="WP_011079178.1">
    <property type="nucleotide sequence ID" value="NC_005139.1"/>
</dbReference>
<dbReference type="SMR" id="Q7MQ83"/>
<dbReference type="STRING" id="672.VV93_v1c01130"/>
<dbReference type="GeneID" id="93895442"/>
<dbReference type="KEGG" id="vvy:VV0126"/>
<dbReference type="eggNOG" id="COG1249">
    <property type="taxonomic scope" value="Bacteria"/>
</dbReference>
<dbReference type="HOGENOM" id="CLU_016755_0_0_6"/>
<dbReference type="Proteomes" id="UP000002675">
    <property type="component" value="Chromosome I"/>
</dbReference>
<dbReference type="GO" id="GO:0005829">
    <property type="term" value="C:cytosol"/>
    <property type="evidence" value="ECO:0007669"/>
    <property type="project" value="TreeGrafter"/>
</dbReference>
<dbReference type="GO" id="GO:0004148">
    <property type="term" value="F:dihydrolipoyl dehydrogenase (NADH) activity"/>
    <property type="evidence" value="ECO:0007669"/>
    <property type="project" value="TreeGrafter"/>
</dbReference>
<dbReference type="GO" id="GO:0050660">
    <property type="term" value="F:flavin adenine dinucleotide binding"/>
    <property type="evidence" value="ECO:0007669"/>
    <property type="project" value="TreeGrafter"/>
</dbReference>
<dbReference type="GO" id="GO:0003957">
    <property type="term" value="F:NAD(P)+ transhydrogenase (Si-specific) activity"/>
    <property type="evidence" value="ECO:0007669"/>
    <property type="project" value="UniProtKB-UniRule"/>
</dbReference>
<dbReference type="GO" id="GO:0006103">
    <property type="term" value="P:2-oxoglutarate metabolic process"/>
    <property type="evidence" value="ECO:0007669"/>
    <property type="project" value="TreeGrafter"/>
</dbReference>
<dbReference type="GO" id="GO:0006739">
    <property type="term" value="P:NADP metabolic process"/>
    <property type="evidence" value="ECO:0007669"/>
    <property type="project" value="UniProtKB-UniRule"/>
</dbReference>
<dbReference type="FunFam" id="3.30.390.30:FF:000002">
    <property type="entry name" value="Soluble pyridine nucleotide transhydrogenase"/>
    <property type="match status" value="1"/>
</dbReference>
<dbReference type="FunFam" id="3.50.50.60:FF:000008">
    <property type="entry name" value="Soluble pyridine nucleotide transhydrogenase"/>
    <property type="match status" value="1"/>
</dbReference>
<dbReference type="Gene3D" id="3.30.390.30">
    <property type="match status" value="1"/>
</dbReference>
<dbReference type="Gene3D" id="3.50.50.60">
    <property type="entry name" value="FAD/NAD(P)-binding domain"/>
    <property type="match status" value="2"/>
</dbReference>
<dbReference type="HAMAP" id="MF_00247">
    <property type="entry name" value="SthA"/>
    <property type="match status" value="1"/>
</dbReference>
<dbReference type="InterPro" id="IPR050151">
    <property type="entry name" value="Class-I_Pyr_Nuc-Dis_Oxidored"/>
</dbReference>
<dbReference type="InterPro" id="IPR036188">
    <property type="entry name" value="FAD/NAD-bd_sf"/>
</dbReference>
<dbReference type="InterPro" id="IPR023753">
    <property type="entry name" value="FAD/NAD-binding_dom"/>
</dbReference>
<dbReference type="InterPro" id="IPR016156">
    <property type="entry name" value="FAD/NAD-linked_Rdtase_dimer_sf"/>
</dbReference>
<dbReference type="InterPro" id="IPR001100">
    <property type="entry name" value="Pyr_nuc-diS_OxRdtase"/>
</dbReference>
<dbReference type="InterPro" id="IPR004099">
    <property type="entry name" value="Pyr_nucl-diS_OxRdtase_dimer"/>
</dbReference>
<dbReference type="InterPro" id="IPR022962">
    <property type="entry name" value="STH_gammaproteobact"/>
</dbReference>
<dbReference type="NCBIfam" id="NF003585">
    <property type="entry name" value="PRK05249.1"/>
    <property type="match status" value="1"/>
</dbReference>
<dbReference type="PANTHER" id="PTHR22912">
    <property type="entry name" value="DISULFIDE OXIDOREDUCTASE"/>
    <property type="match status" value="1"/>
</dbReference>
<dbReference type="PANTHER" id="PTHR22912:SF93">
    <property type="entry name" value="SOLUBLE PYRIDINE NUCLEOTIDE TRANSHYDROGENASE"/>
    <property type="match status" value="1"/>
</dbReference>
<dbReference type="Pfam" id="PF07992">
    <property type="entry name" value="Pyr_redox_2"/>
    <property type="match status" value="1"/>
</dbReference>
<dbReference type="Pfam" id="PF02852">
    <property type="entry name" value="Pyr_redox_dim"/>
    <property type="match status" value="1"/>
</dbReference>
<dbReference type="PIRSF" id="PIRSF000350">
    <property type="entry name" value="Mercury_reductase_MerA"/>
    <property type="match status" value="1"/>
</dbReference>
<dbReference type="PRINTS" id="PR00368">
    <property type="entry name" value="FADPNR"/>
</dbReference>
<dbReference type="PRINTS" id="PR00411">
    <property type="entry name" value="PNDRDTASEI"/>
</dbReference>
<dbReference type="SUPFAM" id="SSF51905">
    <property type="entry name" value="FAD/NAD(P)-binding domain"/>
    <property type="match status" value="1"/>
</dbReference>
<dbReference type="SUPFAM" id="SSF55424">
    <property type="entry name" value="FAD/NAD-linked reductases, dimerisation (C-terminal) domain"/>
    <property type="match status" value="1"/>
</dbReference>
<protein>
    <recommendedName>
        <fullName evidence="1">Soluble pyridine nucleotide transhydrogenase</fullName>
        <shortName evidence="1">STH</shortName>
        <ecNumber evidence="1">1.6.1.1</ecNumber>
    </recommendedName>
    <alternativeName>
        <fullName evidence="1">NAD(P)(+) transhydrogenase [B-specific]</fullName>
    </alternativeName>
</protein>